<sequence>MAGLFYLGGRDHNKQDHHQEKDHNEDKSNNYLYLYKDEIYNNNKGFEIFPPQYFQQQQQQNHAAAPTNLYSFGMVPSGGNINNNRSTNRSLYFNVVSDHEPVRSSTGGFTVTRQGNMNCQDCGNQAKKDCPHMRCRTCCKSRGFDCQTHVKSTWVSAAKRRERQAQLAVLPAKRIRDANSRGGGDDDDDDKEDEKNDSCGGGSALACTRVVNASSSGLETSHLPPEISSPAVFRCMRVSSIDDEDEEYAYQTAVSIGGHVFKGILYDQGPSSDHHRYSSSLNGETSHQHHLNLMDSTPSAATTNAVTAVNTNNGSIDPSSLYTAVATPFNAFVAGGTPFFASSRC</sequence>
<name>SRS7_ARATH</name>
<comment type="function">
    <text evidence="3 4">Transcription activator that binds DNA on 5'-ACTCTAC-3' and promotes auxin homeostasis-regulating gene expression (e.g. YUC genes), as well as genes affecting stamen development, cell expansion and timing of flowering. Synergistically with other SHI-related proteins, regulates gynoecium, stamen and leaf development in a dose-dependent manner, controlling apical-basal patterning. Promotes style and stigma formation, and influences vascular development during gynoecium development. May also have a role in the formation and/or maintenance of the shoot apical meristem (SAM). Regulates anther dehiscence and floral development.</text>
</comment>
<comment type="interaction">
    <interactant intactId="EBI-15194151">
        <id>Q9FXH7</id>
    </interactant>
    <interactant intactId="EBI-4426144">
        <id>Q9C9L2</id>
        <label>TCP15</label>
    </interactant>
    <organismsDiffer>false</organismsDiffer>
    <experiments>3</experiments>
</comment>
<comment type="subcellular location">
    <subcellularLocation>
        <location evidence="4">Nucleus</location>
    </subcellularLocation>
</comment>
<comment type="alternative products">
    <event type="alternative splicing"/>
    <isoform>
        <id>Q9FXH7-1</id>
        <name>1</name>
        <sequence type="displayed"/>
    </isoform>
    <isoform>
        <id>Q9FXH7-2</id>
        <name>2</name>
        <sequence type="described" ref="VSP_053446 VSP_053447"/>
    </isoform>
</comment>
<comment type="tissue specificity">
    <text evidence="4">Mainly expressed in the filaments of flowers, the shoot apex regions and pollen. Also present in leaves.</text>
</comment>
<comment type="developmental stage">
    <text evidence="4">In young plants, detected at a low level only in the root tips and lateral root primordia. In fully open flowers, primarily observed in the filaments and anthers.</text>
</comment>
<comment type="disruption phenotype">
    <text evidence="3 4">No visible phenotype.</text>
</comment>
<comment type="similarity">
    <text evidence="6">Belongs to the SHI protein family.</text>
</comment>
<accession>Q9FXH7</accession>
<accession>Q5Q0G2</accession>
<accession>Q5Q0G3</accession>
<feature type="chain" id="PRO_0000424579" description="Protein SHI RELATED SEQUENCE 7">
    <location>
        <begin position="1"/>
        <end position="345"/>
    </location>
</feature>
<feature type="DNA-binding region" description="Zn(2)-C6 fungal-type; degenerate" evidence="1">
    <location>
        <begin position="119"/>
        <end position="146"/>
    </location>
</feature>
<feature type="region of interest" description="Disordered" evidence="2">
    <location>
        <begin position="7"/>
        <end position="28"/>
    </location>
</feature>
<feature type="region of interest" description="Disordered" evidence="2">
    <location>
        <begin position="168"/>
        <end position="200"/>
    </location>
</feature>
<feature type="short sequence motif" description="Required for homo- and heterodimerization" evidence="1">
    <location>
        <begin position="256"/>
        <end position="259"/>
    </location>
</feature>
<feature type="compositionally biased region" description="Basic and acidic residues" evidence="2">
    <location>
        <begin position="9"/>
        <end position="28"/>
    </location>
</feature>
<feature type="binding site" evidence="1">
    <location>
        <position position="119"/>
    </location>
    <ligand>
        <name>Zn(2+)</name>
        <dbReference type="ChEBI" id="CHEBI:29105"/>
        <label>1</label>
    </ligand>
</feature>
<feature type="binding site" evidence="1">
    <location>
        <position position="119"/>
    </location>
    <ligand>
        <name>Zn(2+)</name>
        <dbReference type="ChEBI" id="CHEBI:29105"/>
        <label>2</label>
    </ligand>
</feature>
<feature type="binding site" evidence="1">
    <location>
        <position position="122"/>
    </location>
    <ligand>
        <name>Zn(2+)</name>
        <dbReference type="ChEBI" id="CHEBI:29105"/>
        <label>1</label>
    </ligand>
</feature>
<feature type="binding site" evidence="1">
    <location>
        <position position="130"/>
    </location>
    <ligand>
        <name>Zn(2+)</name>
        <dbReference type="ChEBI" id="CHEBI:29105"/>
        <label>1</label>
    </ligand>
</feature>
<feature type="binding site" evidence="1">
    <location>
        <position position="135"/>
    </location>
    <ligand>
        <name>Zn(2+)</name>
        <dbReference type="ChEBI" id="CHEBI:29105"/>
        <label>1</label>
    </ligand>
</feature>
<feature type="binding site" evidence="1">
    <location>
        <position position="135"/>
    </location>
    <ligand>
        <name>Zn(2+)</name>
        <dbReference type="ChEBI" id="CHEBI:29105"/>
        <label>2</label>
    </ligand>
</feature>
<feature type="binding site" evidence="1">
    <location>
        <position position="139"/>
    </location>
    <ligand>
        <name>Zn(2+)</name>
        <dbReference type="ChEBI" id="CHEBI:29105"/>
        <label>2</label>
    </ligand>
</feature>
<feature type="binding site" evidence="1">
    <location>
        <position position="146"/>
    </location>
    <ligand>
        <name>Zn(2+)</name>
        <dbReference type="ChEBI" id="CHEBI:29105"/>
        <label>2</label>
    </ligand>
</feature>
<feature type="splice variant" id="VSP_053446" description="In isoform 2." evidence="5">
    <original>LETSHLPPEISSPAVFR</original>
    <variation>MTMSFQLINIEKKFQQI</variation>
    <location>
        <begin position="218"/>
        <end position="234"/>
    </location>
</feature>
<feature type="splice variant" id="VSP_053447" description="In isoform 2." evidence="5">
    <location>
        <begin position="235"/>
        <end position="345"/>
    </location>
</feature>
<proteinExistence type="evidence at protein level"/>
<organism>
    <name type="scientific">Arabidopsis thaliana</name>
    <name type="common">Mouse-ear cress</name>
    <dbReference type="NCBI Taxonomy" id="3702"/>
    <lineage>
        <taxon>Eukaryota</taxon>
        <taxon>Viridiplantae</taxon>
        <taxon>Streptophyta</taxon>
        <taxon>Embryophyta</taxon>
        <taxon>Tracheophyta</taxon>
        <taxon>Spermatophyta</taxon>
        <taxon>Magnoliopsida</taxon>
        <taxon>eudicotyledons</taxon>
        <taxon>Gunneridae</taxon>
        <taxon>Pentapetalae</taxon>
        <taxon>rosids</taxon>
        <taxon>malvids</taxon>
        <taxon>Brassicales</taxon>
        <taxon>Brassicaceae</taxon>
        <taxon>Camelineae</taxon>
        <taxon>Arabidopsis</taxon>
    </lineage>
</organism>
<evidence type="ECO:0000250" key="1"/>
<evidence type="ECO:0000256" key="2">
    <source>
        <dbReference type="SAM" id="MobiDB-lite"/>
    </source>
</evidence>
<evidence type="ECO:0000269" key="3">
    <source>
    </source>
</evidence>
<evidence type="ECO:0000269" key="4">
    <source>
    </source>
</evidence>
<evidence type="ECO:0000303" key="5">
    <source>
    </source>
</evidence>
<evidence type="ECO:0000305" key="6"/>
<reference key="1">
    <citation type="journal article" date="2000" name="Nature">
        <title>Sequence and analysis of chromosome 1 of the plant Arabidopsis thaliana.</title>
        <authorList>
            <person name="Theologis A."/>
            <person name="Ecker J.R."/>
            <person name="Palm C.J."/>
            <person name="Federspiel N.A."/>
            <person name="Kaul S."/>
            <person name="White O."/>
            <person name="Alonso J."/>
            <person name="Altafi H."/>
            <person name="Araujo R."/>
            <person name="Bowman C.L."/>
            <person name="Brooks S.Y."/>
            <person name="Buehler E."/>
            <person name="Chan A."/>
            <person name="Chao Q."/>
            <person name="Chen H."/>
            <person name="Cheuk R.F."/>
            <person name="Chin C.W."/>
            <person name="Chung M.K."/>
            <person name="Conn L."/>
            <person name="Conway A.B."/>
            <person name="Conway A.R."/>
            <person name="Creasy T.H."/>
            <person name="Dewar K."/>
            <person name="Dunn P."/>
            <person name="Etgu P."/>
            <person name="Feldblyum T.V."/>
            <person name="Feng J.-D."/>
            <person name="Fong B."/>
            <person name="Fujii C.Y."/>
            <person name="Gill J.E."/>
            <person name="Goldsmith A.D."/>
            <person name="Haas B."/>
            <person name="Hansen N.F."/>
            <person name="Hughes B."/>
            <person name="Huizar L."/>
            <person name="Hunter J.L."/>
            <person name="Jenkins J."/>
            <person name="Johnson-Hopson C."/>
            <person name="Khan S."/>
            <person name="Khaykin E."/>
            <person name="Kim C.J."/>
            <person name="Koo H.L."/>
            <person name="Kremenetskaia I."/>
            <person name="Kurtz D.B."/>
            <person name="Kwan A."/>
            <person name="Lam B."/>
            <person name="Langin-Hooper S."/>
            <person name="Lee A."/>
            <person name="Lee J.M."/>
            <person name="Lenz C.A."/>
            <person name="Li J.H."/>
            <person name="Li Y.-P."/>
            <person name="Lin X."/>
            <person name="Liu S.X."/>
            <person name="Liu Z.A."/>
            <person name="Luros J.S."/>
            <person name="Maiti R."/>
            <person name="Marziali A."/>
            <person name="Militscher J."/>
            <person name="Miranda M."/>
            <person name="Nguyen M."/>
            <person name="Nierman W.C."/>
            <person name="Osborne B.I."/>
            <person name="Pai G."/>
            <person name="Peterson J."/>
            <person name="Pham P.K."/>
            <person name="Rizzo M."/>
            <person name="Rooney T."/>
            <person name="Rowley D."/>
            <person name="Sakano H."/>
            <person name="Salzberg S.L."/>
            <person name="Schwartz J.R."/>
            <person name="Shinn P."/>
            <person name="Southwick A.M."/>
            <person name="Sun H."/>
            <person name="Tallon L.J."/>
            <person name="Tambunga G."/>
            <person name="Toriumi M.J."/>
            <person name="Town C.D."/>
            <person name="Utterback T."/>
            <person name="Van Aken S."/>
            <person name="Vaysberg M."/>
            <person name="Vysotskaia V.S."/>
            <person name="Walker M."/>
            <person name="Wu D."/>
            <person name="Yu G."/>
            <person name="Fraser C.M."/>
            <person name="Venter J.C."/>
            <person name="Davis R.W."/>
        </authorList>
    </citation>
    <scope>NUCLEOTIDE SEQUENCE [LARGE SCALE GENOMIC DNA]</scope>
    <source>
        <strain>cv. Columbia</strain>
    </source>
</reference>
<reference key="2">
    <citation type="journal article" date="2017" name="Plant J.">
        <title>Araport11: a complete reannotation of the Arabidopsis thaliana reference genome.</title>
        <authorList>
            <person name="Cheng C.Y."/>
            <person name="Krishnakumar V."/>
            <person name="Chan A.P."/>
            <person name="Thibaud-Nissen F."/>
            <person name="Schobel S."/>
            <person name="Town C.D."/>
        </authorList>
    </citation>
    <scope>GENOME REANNOTATION</scope>
    <source>
        <strain>cv. Columbia</strain>
    </source>
</reference>
<reference key="3">
    <citation type="journal article" date="2005" name="Plant Physiol.">
        <title>Analysis of the cDNAs of hypothetical genes on Arabidopsis chromosome 2 reveals numerous transcript variants.</title>
        <authorList>
            <person name="Xiao Y.-L."/>
            <person name="Smith S.R."/>
            <person name="Ishmael N."/>
            <person name="Redman J.C."/>
            <person name="Kumar N."/>
            <person name="Monaghan E.L."/>
            <person name="Ayele M."/>
            <person name="Haas B.J."/>
            <person name="Wu H.C."/>
            <person name="Town C.D."/>
        </authorList>
    </citation>
    <scope>NUCLEOTIDE SEQUENCE [LARGE SCALE MRNA] (ISOFORMS 1 AND 2)</scope>
    <source>
        <strain>cv. Columbia</strain>
    </source>
</reference>
<reference key="4">
    <citation type="submission" date="2005-02" db="EMBL/GenBank/DDBJ databases">
        <authorList>
            <person name="Underwood B.A."/>
            <person name="Xiao Y.-L."/>
            <person name="Moskal W.A. Jr."/>
            <person name="Monaghan E.L."/>
            <person name="Wang W."/>
            <person name="Redman J.C."/>
            <person name="Wu H.C."/>
            <person name="Utterback T."/>
            <person name="Town C.D."/>
        </authorList>
    </citation>
    <scope>NUCLEOTIDE SEQUENCE [LARGE SCALE MRNA]</scope>
    <source>
        <strain>cv. Columbia</strain>
    </source>
</reference>
<reference key="5">
    <citation type="journal article" date="2006" name="Plant J.">
        <title>Functionally redundant SHI family genes regulate Arabidopsis gynoecium development in a dose-dependent manner.</title>
        <authorList>
            <person name="Kuusk S."/>
            <person name="Sohlberg J.J."/>
            <person name="Magnus Eklund D."/>
            <person name="Sundberg E."/>
        </authorList>
    </citation>
    <scope>FUNCTION</scope>
    <scope>DISRUPTION PHENOTYPE</scope>
    <scope>GENE FAMILY</scope>
    <scope>NOMENCLATURE</scope>
</reference>
<reference key="6">
    <citation type="journal article" date="2010" name="Plant Mol. Biol.">
        <title>Activation tagging of an Arabidopsis SHI-RELATED SEQUENCE gene produces abnormal anther dehiscence and floral development.</title>
        <authorList>
            <person name="Kim S.G."/>
            <person name="Lee S."/>
            <person name="Kim Y.S."/>
            <person name="Yun D.J."/>
            <person name="Woo J.C."/>
            <person name="Park C.M."/>
        </authorList>
    </citation>
    <scope>FUNCTION</scope>
    <scope>DISRUPTION PHENOTYPE</scope>
    <scope>TISSUE SPECIFICITY</scope>
    <scope>DEVELOPMENTAL STAGE</scope>
    <scope>SUBCELLULAR LOCATION</scope>
    <source>
        <strain>cv. Columbia</strain>
    </source>
</reference>
<reference key="7">
    <citation type="journal article" date="2011" name="Plant Physiol.">
        <title>Expression of Arabidopsis SHORT INTERNODES/STYLISH family genes in auxin biosynthesis zones of aerial organs is dependent on a GCC box-like regulatory element.</title>
        <authorList>
            <person name="Eklund D.M."/>
            <person name="Cierlik I."/>
            <person name="Staaldal V."/>
            <person name="Claes A.R."/>
            <person name="Vestman D."/>
            <person name="Chandler J."/>
            <person name="Sundberg E."/>
        </authorList>
    </citation>
    <scope>GENE FAMILY</scope>
</reference>
<protein>
    <recommendedName>
        <fullName>Protein SHI RELATED SEQUENCE 7</fullName>
    </recommendedName>
</protein>
<gene>
    <name type="primary">SRS7</name>
    <name type="ordered locus">At1g19790</name>
    <name type="ORF">F6F9.16</name>
</gene>
<keyword id="KW-0010">Activator</keyword>
<keyword id="KW-0025">Alternative splicing</keyword>
<keyword id="KW-0073">Auxin biosynthesis</keyword>
<keyword id="KW-0927">Auxin signaling pathway</keyword>
<keyword id="KW-0217">Developmental protein</keyword>
<keyword id="KW-0238">DNA-binding</keyword>
<keyword id="KW-0479">Metal-binding</keyword>
<keyword id="KW-0539">Nucleus</keyword>
<keyword id="KW-1185">Reference proteome</keyword>
<keyword id="KW-0862">Zinc</keyword>
<dbReference type="EMBL" id="AC007797">
    <property type="protein sequence ID" value="AAG12552.1"/>
    <property type="molecule type" value="Genomic_DNA"/>
</dbReference>
<dbReference type="EMBL" id="CP002684">
    <property type="protein sequence ID" value="AEE29897.1"/>
    <property type="molecule type" value="Genomic_DNA"/>
</dbReference>
<dbReference type="EMBL" id="CP002684">
    <property type="protein sequence ID" value="AEE29898.1"/>
    <property type="molecule type" value="Genomic_DNA"/>
</dbReference>
<dbReference type="EMBL" id="AY800588">
    <property type="protein sequence ID" value="AAV68824.1"/>
    <property type="molecule type" value="mRNA"/>
</dbReference>
<dbReference type="EMBL" id="AY800589">
    <property type="protein sequence ID" value="AAV68825.1"/>
    <property type="molecule type" value="mRNA"/>
</dbReference>
<dbReference type="EMBL" id="AY924676">
    <property type="protein sequence ID" value="AAX23751.1"/>
    <property type="molecule type" value="mRNA"/>
</dbReference>
<dbReference type="PIR" id="A86331">
    <property type="entry name" value="A86331"/>
</dbReference>
<dbReference type="RefSeq" id="NP_001031069.1">
    <molecule id="Q9FXH7-1"/>
    <property type="nucleotide sequence ID" value="NM_001035992.4"/>
</dbReference>
<dbReference type="RefSeq" id="NP_173409.1">
    <molecule id="Q9FXH7-1"/>
    <property type="nucleotide sequence ID" value="NM_101835.3"/>
</dbReference>
<dbReference type="BioGRID" id="23806">
    <property type="interactions" value="16"/>
</dbReference>
<dbReference type="FunCoup" id="Q9FXH7">
    <property type="interactions" value="14"/>
</dbReference>
<dbReference type="IntAct" id="Q9FXH7">
    <property type="interactions" value="14"/>
</dbReference>
<dbReference type="STRING" id="3702.Q9FXH7"/>
<dbReference type="PaxDb" id="3702-AT1G19790.2"/>
<dbReference type="ProteomicsDB" id="226742">
    <molecule id="Q9FXH7-1"/>
</dbReference>
<dbReference type="EnsemblPlants" id="AT1G19790.1">
    <molecule id="Q9FXH7-1"/>
    <property type="protein sequence ID" value="AT1G19790.1"/>
    <property type="gene ID" value="AT1G19790"/>
</dbReference>
<dbReference type="EnsemblPlants" id="AT1G19790.2">
    <molecule id="Q9FXH7-1"/>
    <property type="protein sequence ID" value="AT1G19790.2"/>
    <property type="gene ID" value="AT1G19790"/>
</dbReference>
<dbReference type="GeneID" id="838567"/>
<dbReference type="Gramene" id="AT1G19790.1">
    <molecule id="Q9FXH7-1"/>
    <property type="protein sequence ID" value="AT1G19790.1"/>
    <property type="gene ID" value="AT1G19790"/>
</dbReference>
<dbReference type="Gramene" id="AT1G19790.2">
    <molecule id="Q9FXH7-1"/>
    <property type="protein sequence ID" value="AT1G19790.2"/>
    <property type="gene ID" value="AT1G19790"/>
</dbReference>
<dbReference type="KEGG" id="ath:AT1G19790"/>
<dbReference type="Araport" id="AT1G19790"/>
<dbReference type="TAIR" id="AT1G19790">
    <property type="gene designation" value="SRS7"/>
</dbReference>
<dbReference type="eggNOG" id="ENOG502QQ15">
    <property type="taxonomic scope" value="Eukaryota"/>
</dbReference>
<dbReference type="HOGENOM" id="CLU_041493_1_0_1"/>
<dbReference type="InParanoid" id="Q9FXH7"/>
<dbReference type="OMA" id="FEIFPPQ"/>
<dbReference type="PhylomeDB" id="Q9FXH7"/>
<dbReference type="PRO" id="PR:Q9FXH7"/>
<dbReference type="Proteomes" id="UP000006548">
    <property type="component" value="Chromosome 1"/>
</dbReference>
<dbReference type="ExpressionAtlas" id="Q9FXH7">
    <property type="expression patterns" value="baseline and differential"/>
</dbReference>
<dbReference type="GO" id="GO:0005634">
    <property type="term" value="C:nucleus"/>
    <property type="evidence" value="ECO:0000314"/>
    <property type="project" value="UniProtKB"/>
</dbReference>
<dbReference type="GO" id="GO:0003677">
    <property type="term" value="F:DNA binding"/>
    <property type="evidence" value="ECO:0007669"/>
    <property type="project" value="UniProtKB-KW"/>
</dbReference>
<dbReference type="GO" id="GO:0003700">
    <property type="term" value="F:DNA-binding transcription factor activity"/>
    <property type="evidence" value="ECO:0007669"/>
    <property type="project" value="InterPro"/>
</dbReference>
<dbReference type="GO" id="GO:0046872">
    <property type="term" value="F:metal ion binding"/>
    <property type="evidence" value="ECO:0007669"/>
    <property type="project" value="UniProtKB-KW"/>
</dbReference>
<dbReference type="GO" id="GO:0009851">
    <property type="term" value="P:auxin biosynthetic process"/>
    <property type="evidence" value="ECO:0007669"/>
    <property type="project" value="UniProtKB-KW"/>
</dbReference>
<dbReference type="GO" id="GO:0009734">
    <property type="term" value="P:auxin-activated signaling pathway"/>
    <property type="evidence" value="ECO:0007669"/>
    <property type="project" value="UniProtKB-KW"/>
</dbReference>
<dbReference type="GO" id="GO:0009299">
    <property type="term" value="P:mRNA transcription"/>
    <property type="evidence" value="ECO:0000314"/>
    <property type="project" value="UniProtKB"/>
</dbReference>
<dbReference type="InterPro" id="IPR007818">
    <property type="entry name" value="SHI"/>
</dbReference>
<dbReference type="InterPro" id="IPR006511">
    <property type="entry name" value="SHI_C"/>
</dbReference>
<dbReference type="InterPro" id="IPR006510">
    <property type="entry name" value="Znf_LRP1"/>
</dbReference>
<dbReference type="NCBIfam" id="TIGR01624">
    <property type="entry name" value="LRP1_Cterm"/>
    <property type="match status" value="1"/>
</dbReference>
<dbReference type="NCBIfam" id="TIGR01623">
    <property type="entry name" value="put_zinc_LRP1"/>
    <property type="match status" value="1"/>
</dbReference>
<dbReference type="PANTHER" id="PTHR31604">
    <property type="entry name" value="PROTEIN LATERAL ROOT PRIMORDIUM 1"/>
    <property type="match status" value="1"/>
</dbReference>
<dbReference type="PANTHER" id="PTHR31604:SF2">
    <property type="entry name" value="PROTEIN SHI RELATED SEQUENCE 7"/>
    <property type="match status" value="1"/>
</dbReference>
<dbReference type="Pfam" id="PF05142">
    <property type="entry name" value="DUF702"/>
    <property type="match status" value="1"/>
</dbReference>